<accession>Q9KNH5</accession>
<name>ATPB_VIBCH</name>
<keyword id="KW-0066">ATP synthesis</keyword>
<keyword id="KW-0067">ATP-binding</keyword>
<keyword id="KW-0997">Cell inner membrane</keyword>
<keyword id="KW-1003">Cell membrane</keyword>
<keyword id="KW-0139">CF(1)</keyword>
<keyword id="KW-0375">Hydrogen ion transport</keyword>
<keyword id="KW-0406">Ion transport</keyword>
<keyword id="KW-0472">Membrane</keyword>
<keyword id="KW-0547">Nucleotide-binding</keyword>
<keyword id="KW-1185">Reference proteome</keyword>
<keyword id="KW-1278">Translocase</keyword>
<keyword id="KW-0813">Transport</keyword>
<sequence>MATGKIVQIIGAVVDVEFPQSEVPSVYDALNVVDSKERLVLEVQQQLGGGVIRAIVMGSSDGLRRGMTVQNTGAPISVPVGTKTLGRIMNVLGDAIDERGDIGAEEVYSIHRPAPSYEEQSSATELLETGVKVIDLICPFAKGGKIGLFGGAGVGKTVNMMELINNIALQHSGLSVFAGVGERTREGNDFYHEMQEAGVVNVEQPELSKVAMVYGQMNEPPGNRLRVALTGLTMAEKFRDEGRDVLLFIDNIYRYTLAGTEVSALLGRMPSAVGYQPTLAEEMGVLQERITSTKKGSITSVQAVYVPADDLTDPSPATTFAHLDATVVLNRNIAAMGLYPAIDPLDSTSRQLDPLVVGQEHYDVARGVQATLQRYKELKDIIAILGMDELSEADKQVVARARKIERFLTQPYHVAEVFTGDPGVYVPLKETLRGFKGLLAGDYDDIPEQAFMYCGTIDDAIENAKKL</sequence>
<protein>
    <recommendedName>
        <fullName evidence="2">ATP synthase subunit beta</fullName>
        <ecNumber evidence="2">7.1.2.2</ecNumber>
    </recommendedName>
    <alternativeName>
        <fullName evidence="2">ATP synthase F1 sector subunit beta</fullName>
    </alternativeName>
    <alternativeName>
        <fullName evidence="2">F-ATPase subunit beta</fullName>
    </alternativeName>
</protein>
<organism>
    <name type="scientific">Vibrio cholerae serotype O1 (strain ATCC 39315 / El Tor Inaba N16961)</name>
    <dbReference type="NCBI Taxonomy" id="243277"/>
    <lineage>
        <taxon>Bacteria</taxon>
        <taxon>Pseudomonadati</taxon>
        <taxon>Pseudomonadota</taxon>
        <taxon>Gammaproteobacteria</taxon>
        <taxon>Vibrionales</taxon>
        <taxon>Vibrionaceae</taxon>
        <taxon>Vibrio</taxon>
    </lineage>
</organism>
<evidence type="ECO:0000250" key="1"/>
<evidence type="ECO:0000255" key="2">
    <source>
        <dbReference type="HAMAP-Rule" id="MF_01347"/>
    </source>
</evidence>
<dbReference type="EC" id="7.1.2.2" evidence="2"/>
<dbReference type="EMBL" id="AE003852">
    <property type="protein sequence ID" value="AAF95903.1"/>
    <property type="molecule type" value="Genomic_DNA"/>
</dbReference>
<dbReference type="PIR" id="F82036">
    <property type="entry name" value="F82036"/>
</dbReference>
<dbReference type="RefSeq" id="NP_232390.1">
    <property type="nucleotide sequence ID" value="NC_002505.1"/>
</dbReference>
<dbReference type="RefSeq" id="WP_000190491.1">
    <property type="nucleotide sequence ID" value="NZ_LT906614.1"/>
</dbReference>
<dbReference type="SMR" id="Q9KNH5"/>
<dbReference type="STRING" id="243277.VC_2764"/>
<dbReference type="DNASU" id="2614941"/>
<dbReference type="EnsemblBacteria" id="AAF95903">
    <property type="protein sequence ID" value="AAF95903"/>
    <property type="gene ID" value="VC_2764"/>
</dbReference>
<dbReference type="GeneID" id="69721148"/>
<dbReference type="KEGG" id="vch:VC_2764"/>
<dbReference type="PATRIC" id="fig|243277.26.peg.2639"/>
<dbReference type="eggNOG" id="COG0055">
    <property type="taxonomic scope" value="Bacteria"/>
</dbReference>
<dbReference type="HOGENOM" id="CLU_022398_0_2_6"/>
<dbReference type="Proteomes" id="UP000000584">
    <property type="component" value="Chromosome 1"/>
</dbReference>
<dbReference type="GO" id="GO:0005886">
    <property type="term" value="C:plasma membrane"/>
    <property type="evidence" value="ECO:0007669"/>
    <property type="project" value="UniProtKB-SubCell"/>
</dbReference>
<dbReference type="GO" id="GO:0045259">
    <property type="term" value="C:proton-transporting ATP synthase complex"/>
    <property type="evidence" value="ECO:0007669"/>
    <property type="project" value="UniProtKB-KW"/>
</dbReference>
<dbReference type="GO" id="GO:0005524">
    <property type="term" value="F:ATP binding"/>
    <property type="evidence" value="ECO:0007669"/>
    <property type="project" value="UniProtKB-UniRule"/>
</dbReference>
<dbReference type="GO" id="GO:0016887">
    <property type="term" value="F:ATP hydrolysis activity"/>
    <property type="evidence" value="ECO:0007669"/>
    <property type="project" value="InterPro"/>
</dbReference>
<dbReference type="GO" id="GO:0046933">
    <property type="term" value="F:proton-transporting ATP synthase activity, rotational mechanism"/>
    <property type="evidence" value="ECO:0007669"/>
    <property type="project" value="UniProtKB-UniRule"/>
</dbReference>
<dbReference type="CDD" id="cd18110">
    <property type="entry name" value="ATP-synt_F1_beta_C"/>
    <property type="match status" value="1"/>
</dbReference>
<dbReference type="CDD" id="cd18115">
    <property type="entry name" value="ATP-synt_F1_beta_N"/>
    <property type="match status" value="1"/>
</dbReference>
<dbReference type="CDD" id="cd01133">
    <property type="entry name" value="F1-ATPase_beta_CD"/>
    <property type="match status" value="1"/>
</dbReference>
<dbReference type="FunFam" id="1.10.1140.10:FF:000001">
    <property type="entry name" value="ATP synthase subunit beta"/>
    <property type="match status" value="1"/>
</dbReference>
<dbReference type="FunFam" id="2.40.10.170:FF:000003">
    <property type="entry name" value="ATP synthase subunit beta"/>
    <property type="match status" value="1"/>
</dbReference>
<dbReference type="FunFam" id="3.40.50.300:FF:000004">
    <property type="entry name" value="ATP synthase subunit beta"/>
    <property type="match status" value="1"/>
</dbReference>
<dbReference type="Gene3D" id="2.40.10.170">
    <property type="match status" value="1"/>
</dbReference>
<dbReference type="Gene3D" id="1.10.1140.10">
    <property type="entry name" value="Bovine Mitochondrial F1-atpase, Atp Synthase Beta Chain, Chain D, domain 3"/>
    <property type="match status" value="1"/>
</dbReference>
<dbReference type="Gene3D" id="3.40.50.300">
    <property type="entry name" value="P-loop containing nucleotide triphosphate hydrolases"/>
    <property type="match status" value="1"/>
</dbReference>
<dbReference type="HAMAP" id="MF_01347">
    <property type="entry name" value="ATP_synth_beta_bact"/>
    <property type="match status" value="1"/>
</dbReference>
<dbReference type="InterPro" id="IPR003593">
    <property type="entry name" value="AAA+_ATPase"/>
</dbReference>
<dbReference type="InterPro" id="IPR055190">
    <property type="entry name" value="ATP-synt_VA_C"/>
</dbReference>
<dbReference type="InterPro" id="IPR005722">
    <property type="entry name" value="ATP_synth_F1_bsu"/>
</dbReference>
<dbReference type="InterPro" id="IPR020003">
    <property type="entry name" value="ATPase_a/bsu_AS"/>
</dbReference>
<dbReference type="InterPro" id="IPR050053">
    <property type="entry name" value="ATPase_alpha/beta_chains"/>
</dbReference>
<dbReference type="InterPro" id="IPR004100">
    <property type="entry name" value="ATPase_F1/V1/A1_a/bsu_N"/>
</dbReference>
<dbReference type="InterPro" id="IPR036121">
    <property type="entry name" value="ATPase_F1/V1/A1_a/bsu_N_sf"/>
</dbReference>
<dbReference type="InterPro" id="IPR000194">
    <property type="entry name" value="ATPase_F1/V1/A1_a/bsu_nucl-bd"/>
</dbReference>
<dbReference type="InterPro" id="IPR024034">
    <property type="entry name" value="ATPase_F1/V1_b/a_C"/>
</dbReference>
<dbReference type="InterPro" id="IPR027417">
    <property type="entry name" value="P-loop_NTPase"/>
</dbReference>
<dbReference type="NCBIfam" id="TIGR01039">
    <property type="entry name" value="atpD"/>
    <property type="match status" value="1"/>
</dbReference>
<dbReference type="PANTHER" id="PTHR15184">
    <property type="entry name" value="ATP SYNTHASE"/>
    <property type="match status" value="1"/>
</dbReference>
<dbReference type="PANTHER" id="PTHR15184:SF71">
    <property type="entry name" value="ATP SYNTHASE SUBUNIT BETA, MITOCHONDRIAL"/>
    <property type="match status" value="1"/>
</dbReference>
<dbReference type="Pfam" id="PF00006">
    <property type="entry name" value="ATP-synt_ab"/>
    <property type="match status" value="1"/>
</dbReference>
<dbReference type="Pfam" id="PF02874">
    <property type="entry name" value="ATP-synt_ab_N"/>
    <property type="match status" value="1"/>
</dbReference>
<dbReference type="Pfam" id="PF22919">
    <property type="entry name" value="ATP-synt_VA_C"/>
    <property type="match status" value="1"/>
</dbReference>
<dbReference type="SMART" id="SM00382">
    <property type="entry name" value="AAA"/>
    <property type="match status" value="1"/>
</dbReference>
<dbReference type="SUPFAM" id="SSF47917">
    <property type="entry name" value="C-terminal domain of alpha and beta subunits of F1 ATP synthase"/>
    <property type="match status" value="1"/>
</dbReference>
<dbReference type="SUPFAM" id="SSF50615">
    <property type="entry name" value="N-terminal domain of alpha and beta subunits of F1 ATP synthase"/>
    <property type="match status" value="1"/>
</dbReference>
<dbReference type="SUPFAM" id="SSF52540">
    <property type="entry name" value="P-loop containing nucleoside triphosphate hydrolases"/>
    <property type="match status" value="1"/>
</dbReference>
<dbReference type="PROSITE" id="PS00152">
    <property type="entry name" value="ATPASE_ALPHA_BETA"/>
    <property type="match status" value="1"/>
</dbReference>
<gene>
    <name evidence="2" type="primary">atpD</name>
    <name type="ordered locus">VC_2764</name>
</gene>
<proteinExistence type="inferred from homology"/>
<feature type="initiator methionine" description="Removed" evidence="1">
    <location>
        <position position="1"/>
    </location>
</feature>
<feature type="chain" id="PRO_0000144487" description="ATP synthase subunit beta">
    <location>
        <begin position="2"/>
        <end position="467"/>
    </location>
</feature>
<feature type="binding site" evidence="2">
    <location>
        <begin position="150"/>
        <end position="157"/>
    </location>
    <ligand>
        <name>ATP</name>
        <dbReference type="ChEBI" id="CHEBI:30616"/>
    </ligand>
</feature>
<comment type="function">
    <text evidence="2">Produces ATP from ADP in the presence of a proton gradient across the membrane. The catalytic sites are hosted primarily by the beta subunits.</text>
</comment>
<comment type="catalytic activity">
    <reaction evidence="2">
        <text>ATP + H2O + 4 H(+)(in) = ADP + phosphate + 5 H(+)(out)</text>
        <dbReference type="Rhea" id="RHEA:57720"/>
        <dbReference type="ChEBI" id="CHEBI:15377"/>
        <dbReference type="ChEBI" id="CHEBI:15378"/>
        <dbReference type="ChEBI" id="CHEBI:30616"/>
        <dbReference type="ChEBI" id="CHEBI:43474"/>
        <dbReference type="ChEBI" id="CHEBI:456216"/>
        <dbReference type="EC" id="7.1.2.2"/>
    </reaction>
</comment>
<comment type="subunit">
    <text evidence="2">F-type ATPases have 2 components, CF(1) - the catalytic core - and CF(0) - the membrane proton channel. CF(1) has five subunits: alpha(3), beta(3), gamma(1), delta(1), epsilon(1). CF(0) has three main subunits: a(1), b(2) and c(9-12). The alpha and beta chains form an alternating ring which encloses part of the gamma chain. CF(1) is attached to CF(0) by a central stalk formed by the gamma and epsilon chains, while a peripheral stalk is formed by the delta and b chains.</text>
</comment>
<comment type="subcellular location">
    <subcellularLocation>
        <location evidence="2">Cell inner membrane</location>
        <topology evidence="2">Peripheral membrane protein</topology>
    </subcellularLocation>
</comment>
<comment type="similarity">
    <text evidence="2">Belongs to the ATPase alpha/beta chains family.</text>
</comment>
<reference key="1">
    <citation type="journal article" date="2000" name="Nature">
        <title>DNA sequence of both chromosomes of the cholera pathogen Vibrio cholerae.</title>
        <authorList>
            <person name="Heidelberg J.F."/>
            <person name="Eisen J.A."/>
            <person name="Nelson W.C."/>
            <person name="Clayton R.A."/>
            <person name="Gwinn M.L."/>
            <person name="Dodson R.J."/>
            <person name="Haft D.H."/>
            <person name="Hickey E.K."/>
            <person name="Peterson J.D."/>
            <person name="Umayam L.A."/>
            <person name="Gill S.R."/>
            <person name="Nelson K.E."/>
            <person name="Read T.D."/>
            <person name="Tettelin H."/>
            <person name="Richardson D.L."/>
            <person name="Ermolaeva M.D."/>
            <person name="Vamathevan J.J."/>
            <person name="Bass S."/>
            <person name="Qin H."/>
            <person name="Dragoi I."/>
            <person name="Sellers P."/>
            <person name="McDonald L.A."/>
            <person name="Utterback T.R."/>
            <person name="Fleischmann R.D."/>
            <person name="Nierman W.C."/>
            <person name="White O."/>
            <person name="Salzberg S.L."/>
            <person name="Smith H.O."/>
            <person name="Colwell R.R."/>
            <person name="Mekalanos J.J."/>
            <person name="Venter J.C."/>
            <person name="Fraser C.M."/>
        </authorList>
    </citation>
    <scope>NUCLEOTIDE SEQUENCE [LARGE SCALE GENOMIC DNA]</scope>
    <source>
        <strain>ATCC 39315 / El Tor Inaba N16961</strain>
    </source>
</reference>